<accession>Q1RH04</accession>
<protein>
    <recommendedName>
        <fullName evidence="1">Large ribosomal subunit protein bL28</fullName>
    </recommendedName>
    <alternativeName>
        <fullName evidence="2">50S ribosomal protein L28</fullName>
    </alternativeName>
</protein>
<reference key="1">
    <citation type="journal article" date="2006" name="PLoS Genet.">
        <title>Genome sequence of Rickettsia bellii illuminates the role of amoebae in gene exchanges between intracellular pathogens.</title>
        <authorList>
            <person name="Ogata H."/>
            <person name="La Scola B."/>
            <person name="Audic S."/>
            <person name="Renesto P."/>
            <person name="Blanc G."/>
            <person name="Robert C."/>
            <person name="Fournier P.-E."/>
            <person name="Claverie J.-M."/>
            <person name="Raoult D."/>
        </authorList>
    </citation>
    <scope>NUCLEOTIDE SEQUENCE [LARGE SCALE GENOMIC DNA]</scope>
    <source>
        <strain>RML369-C</strain>
    </source>
</reference>
<comment type="similarity">
    <text evidence="1">Belongs to the bacterial ribosomal protein bL28 family.</text>
</comment>
<gene>
    <name evidence="1" type="primary">rpmB</name>
    <name type="ordered locus">RBE_1279</name>
</gene>
<keyword id="KW-0687">Ribonucleoprotein</keyword>
<keyword id="KW-0689">Ribosomal protein</keyword>
<feature type="chain" id="PRO_0000277962" description="Large ribosomal subunit protein bL28">
    <location>
        <begin position="1"/>
        <end position="97"/>
    </location>
</feature>
<dbReference type="EMBL" id="CP000087">
    <property type="protein sequence ID" value="ABE05360.1"/>
    <property type="molecule type" value="Genomic_DNA"/>
</dbReference>
<dbReference type="RefSeq" id="WP_011477930.1">
    <property type="nucleotide sequence ID" value="NC_007940.1"/>
</dbReference>
<dbReference type="SMR" id="Q1RH04"/>
<dbReference type="KEGG" id="rbe:RBE_1279"/>
<dbReference type="eggNOG" id="COG0227">
    <property type="taxonomic scope" value="Bacteria"/>
</dbReference>
<dbReference type="HOGENOM" id="CLU_064548_4_2_5"/>
<dbReference type="OrthoDB" id="9805609at2"/>
<dbReference type="Proteomes" id="UP000001951">
    <property type="component" value="Chromosome"/>
</dbReference>
<dbReference type="GO" id="GO:0022625">
    <property type="term" value="C:cytosolic large ribosomal subunit"/>
    <property type="evidence" value="ECO:0007669"/>
    <property type="project" value="TreeGrafter"/>
</dbReference>
<dbReference type="GO" id="GO:0003735">
    <property type="term" value="F:structural constituent of ribosome"/>
    <property type="evidence" value="ECO:0007669"/>
    <property type="project" value="InterPro"/>
</dbReference>
<dbReference type="GO" id="GO:0006412">
    <property type="term" value="P:translation"/>
    <property type="evidence" value="ECO:0007669"/>
    <property type="project" value="UniProtKB-UniRule"/>
</dbReference>
<dbReference type="Gene3D" id="2.30.170.40">
    <property type="entry name" value="Ribosomal protein L28/L24"/>
    <property type="match status" value="1"/>
</dbReference>
<dbReference type="HAMAP" id="MF_00373">
    <property type="entry name" value="Ribosomal_bL28"/>
    <property type="match status" value="1"/>
</dbReference>
<dbReference type="InterPro" id="IPR026569">
    <property type="entry name" value="Ribosomal_bL28"/>
</dbReference>
<dbReference type="InterPro" id="IPR034704">
    <property type="entry name" value="Ribosomal_bL28/bL31-like_sf"/>
</dbReference>
<dbReference type="InterPro" id="IPR001383">
    <property type="entry name" value="Ribosomal_bL28_bact-type"/>
</dbReference>
<dbReference type="InterPro" id="IPR037147">
    <property type="entry name" value="Ribosomal_bL28_sf"/>
</dbReference>
<dbReference type="NCBIfam" id="TIGR00009">
    <property type="entry name" value="L28"/>
    <property type="match status" value="1"/>
</dbReference>
<dbReference type="PANTHER" id="PTHR13528">
    <property type="entry name" value="39S RIBOSOMAL PROTEIN L28, MITOCHONDRIAL"/>
    <property type="match status" value="1"/>
</dbReference>
<dbReference type="PANTHER" id="PTHR13528:SF2">
    <property type="entry name" value="LARGE RIBOSOMAL SUBUNIT PROTEIN BL28M"/>
    <property type="match status" value="1"/>
</dbReference>
<dbReference type="Pfam" id="PF00830">
    <property type="entry name" value="Ribosomal_L28"/>
    <property type="match status" value="1"/>
</dbReference>
<dbReference type="SUPFAM" id="SSF143800">
    <property type="entry name" value="L28p-like"/>
    <property type="match status" value="1"/>
</dbReference>
<organism>
    <name type="scientific">Rickettsia bellii (strain RML369-C)</name>
    <dbReference type="NCBI Taxonomy" id="336407"/>
    <lineage>
        <taxon>Bacteria</taxon>
        <taxon>Pseudomonadati</taxon>
        <taxon>Pseudomonadota</taxon>
        <taxon>Alphaproteobacteria</taxon>
        <taxon>Rickettsiales</taxon>
        <taxon>Rickettsiaceae</taxon>
        <taxon>Rickettsieae</taxon>
        <taxon>Rickettsia</taxon>
        <taxon>belli group</taxon>
    </lineage>
</organism>
<evidence type="ECO:0000255" key="1">
    <source>
        <dbReference type="HAMAP-Rule" id="MF_00373"/>
    </source>
</evidence>
<evidence type="ECO:0000305" key="2"/>
<sequence>MSRKCELTGVGVLYGNNVSHSQRKTRRRFEPNLRSVKFISDITTAEYRLSVSARCISSVEKAGGFDAYMLKANNDALSTTAKAIKKKIIQTKMAKSL</sequence>
<name>RL28_RICBR</name>
<proteinExistence type="inferred from homology"/>